<gene>
    <name evidence="1" type="primary">rpmF</name>
    <name type="ordered locus">HRM2_31330</name>
</gene>
<comment type="similarity">
    <text evidence="1">Belongs to the bacterial ribosomal protein bL32 family.</text>
</comment>
<reference key="1">
    <citation type="journal article" date="2009" name="Environ. Microbiol.">
        <title>Genome sequence of Desulfobacterium autotrophicum HRM2, a marine sulfate reducer oxidizing organic carbon completely to carbon dioxide.</title>
        <authorList>
            <person name="Strittmatter A.W."/>
            <person name="Liesegang H."/>
            <person name="Rabus R."/>
            <person name="Decker I."/>
            <person name="Amann J."/>
            <person name="Andres S."/>
            <person name="Henne A."/>
            <person name="Fricke W.F."/>
            <person name="Martinez-Arias R."/>
            <person name="Bartels D."/>
            <person name="Goesmann A."/>
            <person name="Krause L."/>
            <person name="Puehler A."/>
            <person name="Klenk H.P."/>
            <person name="Richter M."/>
            <person name="Schuler M."/>
            <person name="Gloeckner F.O."/>
            <person name="Meyerdierks A."/>
            <person name="Gottschalk G."/>
            <person name="Amann R."/>
        </authorList>
    </citation>
    <scope>NUCLEOTIDE SEQUENCE [LARGE SCALE GENOMIC DNA]</scope>
    <source>
        <strain>ATCC 43914 / DSM 3382 / VKM B-1955 / HRM2</strain>
    </source>
</reference>
<evidence type="ECO:0000255" key="1">
    <source>
        <dbReference type="HAMAP-Rule" id="MF_00340"/>
    </source>
</evidence>
<evidence type="ECO:0000256" key="2">
    <source>
        <dbReference type="SAM" id="MobiDB-lite"/>
    </source>
</evidence>
<evidence type="ECO:0000305" key="3"/>
<protein>
    <recommendedName>
        <fullName evidence="1">Large ribosomal subunit protein bL32</fullName>
    </recommendedName>
    <alternativeName>
        <fullName evidence="3">50S ribosomal protein L32</fullName>
    </alternativeName>
</protein>
<accession>C0QKX6</accession>
<proteinExistence type="inferred from homology"/>
<sequence>MAVPKQKSSKSRGRKRRTHQKVAAPTLTVCPECQEAKLPHAACPACGAYRNRNVRPDAVEA</sequence>
<keyword id="KW-1185">Reference proteome</keyword>
<keyword id="KW-0687">Ribonucleoprotein</keyword>
<keyword id="KW-0689">Ribosomal protein</keyword>
<feature type="chain" id="PRO_1000205259" description="Large ribosomal subunit protein bL32">
    <location>
        <begin position="1"/>
        <end position="61"/>
    </location>
</feature>
<feature type="region of interest" description="Disordered" evidence="2">
    <location>
        <begin position="1"/>
        <end position="22"/>
    </location>
</feature>
<feature type="compositionally biased region" description="Basic residues" evidence="2">
    <location>
        <begin position="7"/>
        <end position="20"/>
    </location>
</feature>
<organism>
    <name type="scientific">Desulforapulum autotrophicum (strain ATCC 43914 / DSM 3382 / VKM B-1955 / HRM2)</name>
    <name type="common">Desulfobacterium autotrophicum</name>
    <dbReference type="NCBI Taxonomy" id="177437"/>
    <lineage>
        <taxon>Bacteria</taxon>
        <taxon>Pseudomonadati</taxon>
        <taxon>Thermodesulfobacteriota</taxon>
        <taxon>Desulfobacteria</taxon>
        <taxon>Desulfobacterales</taxon>
        <taxon>Desulfobacteraceae</taxon>
        <taxon>Desulforapulum</taxon>
    </lineage>
</organism>
<dbReference type="EMBL" id="CP001087">
    <property type="protein sequence ID" value="ACN16216.1"/>
    <property type="molecule type" value="Genomic_DNA"/>
</dbReference>
<dbReference type="RefSeq" id="WP_015904978.1">
    <property type="nucleotide sequence ID" value="NC_012108.1"/>
</dbReference>
<dbReference type="SMR" id="C0QKX6"/>
<dbReference type="STRING" id="177437.HRM2_31330"/>
<dbReference type="KEGG" id="dat:HRM2_31330"/>
<dbReference type="eggNOG" id="COG0333">
    <property type="taxonomic scope" value="Bacteria"/>
</dbReference>
<dbReference type="HOGENOM" id="CLU_129084_1_3_7"/>
<dbReference type="OrthoDB" id="9801927at2"/>
<dbReference type="Proteomes" id="UP000000442">
    <property type="component" value="Chromosome"/>
</dbReference>
<dbReference type="GO" id="GO:0015934">
    <property type="term" value="C:large ribosomal subunit"/>
    <property type="evidence" value="ECO:0007669"/>
    <property type="project" value="InterPro"/>
</dbReference>
<dbReference type="GO" id="GO:0003735">
    <property type="term" value="F:structural constituent of ribosome"/>
    <property type="evidence" value="ECO:0007669"/>
    <property type="project" value="InterPro"/>
</dbReference>
<dbReference type="GO" id="GO:0006412">
    <property type="term" value="P:translation"/>
    <property type="evidence" value="ECO:0007669"/>
    <property type="project" value="UniProtKB-UniRule"/>
</dbReference>
<dbReference type="HAMAP" id="MF_00340">
    <property type="entry name" value="Ribosomal_bL32"/>
    <property type="match status" value="1"/>
</dbReference>
<dbReference type="InterPro" id="IPR002677">
    <property type="entry name" value="Ribosomal_bL32"/>
</dbReference>
<dbReference type="InterPro" id="IPR044957">
    <property type="entry name" value="Ribosomal_bL32_bact"/>
</dbReference>
<dbReference type="InterPro" id="IPR011332">
    <property type="entry name" value="Ribosomal_zn-bd"/>
</dbReference>
<dbReference type="NCBIfam" id="TIGR01031">
    <property type="entry name" value="rpmF_bact"/>
    <property type="match status" value="1"/>
</dbReference>
<dbReference type="PANTHER" id="PTHR35534">
    <property type="entry name" value="50S RIBOSOMAL PROTEIN L32"/>
    <property type="match status" value="1"/>
</dbReference>
<dbReference type="PANTHER" id="PTHR35534:SF1">
    <property type="entry name" value="LARGE RIBOSOMAL SUBUNIT PROTEIN BL32"/>
    <property type="match status" value="1"/>
</dbReference>
<dbReference type="Pfam" id="PF01783">
    <property type="entry name" value="Ribosomal_L32p"/>
    <property type="match status" value="1"/>
</dbReference>
<dbReference type="SUPFAM" id="SSF57829">
    <property type="entry name" value="Zn-binding ribosomal proteins"/>
    <property type="match status" value="1"/>
</dbReference>
<name>RL32_DESAH</name>